<proteinExistence type="evidence at protein level"/>
<name>FTSH1_ARATH</name>
<sequence>MASNSLLRSSSNFFLGSHIIISSPTPKTTRKPSFPFSFVSRAKYQITRSSQDENSPNGKPNSPFSSQVALAAILLSSISSSPLALAVVDEPASPSVVIESQAVKPSTPSPLFIQNEILKAPSPKSSDLPEGSQWRYSEFLNAVKKGKVERVRFSKDGSVVQLTAVDNRRASVIVPNDPDLIDILAMNGVDISVSEGESSGNDLFTVIGNLIFPLLAFGGLFLLFRRAQGGPGGGPGGLGGPMDFGRSKSKFQEVPETGVSFADVAGADQAKLELQEVVDFLKNPDKYTALGAKIPKGCLLVGPPGTGKTLLARAVAGEAGVPFFSCAASEFVELFVGVGASRVRDLFEKAKSKAPCIVFIDEIDAVGRQRGAGMGGGNDEREQTINQLLTEMDGFSGNSGVIVLAATNRPDVLDSALLRPGRFDRQVTVDRPDVAGRVKILQVHSRGKALGKDVDFDKVARRTPGFTGADLQNLMNEAAILAARRELKEISKDEISDALERIIAGPEKKNAVVSEEKKRLVAYHEAGHALVGALMPEYDPVAKISIIPRGQAGGLTFFAPSEERLESGLYSRSYLENQMAVALGGRVAEEVIFGDENVTTGASNDFMQVSRVARQMIERFGFSKKIGQVAVGGPGGNPFMGQQMSSQKDYSMATADIVDAEVRELVEKAYKRATEIITTHIDILHKLAQLLIEKETVDGEEFMSLFIDGQAELYIS</sequence>
<organism>
    <name type="scientific">Arabidopsis thaliana</name>
    <name type="common">Mouse-ear cress</name>
    <dbReference type="NCBI Taxonomy" id="3702"/>
    <lineage>
        <taxon>Eukaryota</taxon>
        <taxon>Viridiplantae</taxon>
        <taxon>Streptophyta</taxon>
        <taxon>Embryophyta</taxon>
        <taxon>Tracheophyta</taxon>
        <taxon>Spermatophyta</taxon>
        <taxon>Magnoliopsida</taxon>
        <taxon>eudicotyledons</taxon>
        <taxon>Gunneridae</taxon>
        <taxon>Pentapetalae</taxon>
        <taxon>rosids</taxon>
        <taxon>malvids</taxon>
        <taxon>Brassicales</taxon>
        <taxon>Brassicaceae</taxon>
        <taxon>Camelineae</taxon>
        <taxon>Arabidopsis</taxon>
    </lineage>
</organism>
<gene>
    <name type="primary">FTSH1</name>
    <name type="synonym">AAA</name>
    <name type="synonym">FTSH</name>
    <name type="ordered locus">At1g50250</name>
    <name type="ORF">F14I3.14</name>
</gene>
<evidence type="ECO:0000250" key="1"/>
<evidence type="ECO:0000255" key="2"/>
<evidence type="ECO:0000269" key="3">
    <source>
    </source>
</evidence>
<evidence type="ECO:0000269" key="4">
    <source>
    </source>
</evidence>
<evidence type="ECO:0000269" key="5">
    <source>
    </source>
</evidence>
<evidence type="ECO:0000269" key="6">
    <source>
    </source>
</evidence>
<evidence type="ECO:0000269" key="7">
    <source>
    </source>
</evidence>
<evidence type="ECO:0000269" key="8">
    <source>
    </source>
</evidence>
<evidence type="ECO:0000269" key="9">
    <source>
    </source>
</evidence>
<evidence type="ECO:0000269" key="10">
    <source>
    </source>
</evidence>
<evidence type="ECO:0000269" key="11">
    <source>
    </source>
</evidence>
<evidence type="ECO:0000269" key="12">
    <source>
    </source>
</evidence>
<evidence type="ECO:0000305" key="13"/>
<comment type="function">
    <text evidence="3">Part of a complex that function as an ATP-dependent zinc metallopeptidase. Involved in the thylakoid formation and in the removal of damaged D1 in the photosystem II, preventing cell death under high-intensity light conditions.</text>
</comment>
<comment type="cofactor">
    <cofactor evidence="1">
        <name>Zn(2+)</name>
        <dbReference type="ChEBI" id="CHEBI:29105"/>
    </cofactor>
    <text evidence="1">Binds 1 zinc ion per subunit.</text>
</comment>
<comment type="subunit">
    <text evidence="4 5 8 9 10">Interacts with CHIP and HSP70. Heterohexamers with FTSH2, FTSH5 and FTSH8.</text>
</comment>
<comment type="subcellular location">
    <subcellularLocation>
        <location evidence="4 11 12">Plastid</location>
        <location evidence="4 11 12">Chloroplast thylakoid membrane</location>
        <topology evidence="4 12">Single-pass membrane protein</topology>
        <orientation evidence="4 12">Stromal side</orientation>
    </subcellularLocation>
</comment>
<comment type="tissue specificity">
    <text evidence="8">Ubiquitous.</text>
</comment>
<comment type="developmental stage">
    <text evidence="7">Low expression in cotyledons, increasing with leaves development.</text>
</comment>
<comment type="induction">
    <text evidence="6">By high light.</text>
</comment>
<comment type="PTM">
    <text evidence="10">The FTSH1 precursor is ubiquitinated by CHIP in the cytoplasm.</text>
</comment>
<comment type="disruption phenotype">
    <text evidence="4">No visible changes in phenotype, probably due to a complementation by FTSH5. The presence of both FTSH1 or FTSH5 (subunit type A) and FTSH2 or FTSH8 (subunit type B) is essential for an active complex formation.</text>
</comment>
<comment type="similarity">
    <text evidence="13">In the N-terminal section; belongs to the AAA ATPase family.</text>
</comment>
<comment type="similarity">
    <text evidence="13">In the C-terminal section; belongs to the peptidase M41 family.</text>
</comment>
<comment type="sequence caution" evidence="13">
    <conflict type="frameshift">
        <sequence resource="EMBL-CDS" id="CAA73318"/>
    </conflict>
</comment>
<dbReference type="EC" id="3.4.24.-"/>
<dbReference type="EMBL" id="X99808">
    <property type="protein sequence ID" value="CAA68141.1"/>
    <property type="molecule type" value="mRNA"/>
</dbReference>
<dbReference type="EMBL" id="AC007980">
    <property type="protein sequence ID" value="AAD50055.1"/>
    <property type="molecule type" value="Genomic_DNA"/>
</dbReference>
<dbReference type="EMBL" id="CP002684">
    <property type="protein sequence ID" value="AEE32528.1"/>
    <property type="molecule type" value="Genomic_DNA"/>
</dbReference>
<dbReference type="EMBL" id="AY091095">
    <property type="protein sequence ID" value="AAM14046.1"/>
    <property type="molecule type" value="mRNA"/>
</dbReference>
<dbReference type="EMBL" id="AY123034">
    <property type="protein sequence ID" value="AAM67567.1"/>
    <property type="molecule type" value="mRNA"/>
</dbReference>
<dbReference type="EMBL" id="Y12780">
    <property type="protein sequence ID" value="CAA73318.1"/>
    <property type="status" value="ALT_FRAME"/>
    <property type="molecule type" value="mRNA"/>
</dbReference>
<dbReference type="PIR" id="G96538">
    <property type="entry name" value="G96538"/>
</dbReference>
<dbReference type="RefSeq" id="NP_564563.1">
    <property type="nucleotide sequence ID" value="NM_103909.4"/>
</dbReference>
<dbReference type="SMR" id="Q39102"/>
<dbReference type="BioGRID" id="26672">
    <property type="interactions" value="10"/>
</dbReference>
<dbReference type="FunCoup" id="Q39102">
    <property type="interactions" value="616"/>
</dbReference>
<dbReference type="STRING" id="3702.Q39102"/>
<dbReference type="MEROPS" id="M41.020"/>
<dbReference type="iPTMnet" id="Q39102"/>
<dbReference type="PaxDb" id="3702-AT1G50250.1"/>
<dbReference type="ProteomicsDB" id="228885"/>
<dbReference type="EnsemblPlants" id="AT1G50250.1">
    <property type="protein sequence ID" value="AT1G50250.1"/>
    <property type="gene ID" value="AT1G50250"/>
</dbReference>
<dbReference type="GeneID" id="841447"/>
<dbReference type="Gramene" id="AT1G50250.1">
    <property type="protein sequence ID" value="AT1G50250.1"/>
    <property type="gene ID" value="AT1G50250"/>
</dbReference>
<dbReference type="KEGG" id="ath:AT1G50250"/>
<dbReference type="Araport" id="AT1G50250"/>
<dbReference type="TAIR" id="AT1G50250">
    <property type="gene designation" value="FTSH1"/>
</dbReference>
<dbReference type="eggNOG" id="KOG0731">
    <property type="taxonomic scope" value="Eukaryota"/>
</dbReference>
<dbReference type="HOGENOM" id="CLU_000688_16_2_1"/>
<dbReference type="InParanoid" id="Q39102"/>
<dbReference type="OMA" id="LFLMNQM"/>
<dbReference type="PhylomeDB" id="Q39102"/>
<dbReference type="BRENDA" id="3.4.24.B20">
    <property type="organism ID" value="399"/>
</dbReference>
<dbReference type="CD-CODE" id="4299E36E">
    <property type="entry name" value="Nucleolus"/>
</dbReference>
<dbReference type="PRO" id="PR:Q39102"/>
<dbReference type="Proteomes" id="UP000006548">
    <property type="component" value="Chromosome 1"/>
</dbReference>
<dbReference type="ExpressionAtlas" id="Q39102">
    <property type="expression patterns" value="baseline and differential"/>
</dbReference>
<dbReference type="GO" id="GO:0009507">
    <property type="term" value="C:chloroplast"/>
    <property type="evidence" value="ECO:0000314"/>
    <property type="project" value="TAIR"/>
</dbReference>
<dbReference type="GO" id="GO:0009941">
    <property type="term" value="C:chloroplast envelope"/>
    <property type="evidence" value="ECO:0007005"/>
    <property type="project" value="TAIR"/>
</dbReference>
<dbReference type="GO" id="GO:0009534">
    <property type="term" value="C:chloroplast thylakoid"/>
    <property type="evidence" value="ECO:0007005"/>
    <property type="project" value="TAIR"/>
</dbReference>
<dbReference type="GO" id="GO:0009535">
    <property type="term" value="C:chloroplast thylakoid membrane"/>
    <property type="evidence" value="ECO:0007005"/>
    <property type="project" value="TAIR"/>
</dbReference>
<dbReference type="GO" id="GO:0005634">
    <property type="term" value="C:nucleus"/>
    <property type="evidence" value="ECO:0007005"/>
    <property type="project" value="TAIR"/>
</dbReference>
<dbReference type="GO" id="GO:0031977">
    <property type="term" value="C:thylakoid lumen"/>
    <property type="evidence" value="ECO:0007005"/>
    <property type="project" value="TAIR"/>
</dbReference>
<dbReference type="GO" id="GO:0005524">
    <property type="term" value="F:ATP binding"/>
    <property type="evidence" value="ECO:0007669"/>
    <property type="project" value="UniProtKB-KW"/>
</dbReference>
<dbReference type="GO" id="GO:0016887">
    <property type="term" value="F:ATP hydrolysis activity"/>
    <property type="evidence" value="ECO:0007669"/>
    <property type="project" value="InterPro"/>
</dbReference>
<dbReference type="GO" id="GO:0004176">
    <property type="term" value="F:ATP-dependent peptidase activity"/>
    <property type="evidence" value="ECO:0000250"/>
    <property type="project" value="TAIR"/>
</dbReference>
<dbReference type="GO" id="GO:0046872">
    <property type="term" value="F:metal ion binding"/>
    <property type="evidence" value="ECO:0007669"/>
    <property type="project" value="UniProtKB-KW"/>
</dbReference>
<dbReference type="GO" id="GO:0004222">
    <property type="term" value="F:metalloendopeptidase activity"/>
    <property type="evidence" value="ECO:0007669"/>
    <property type="project" value="InterPro"/>
</dbReference>
<dbReference type="GO" id="GO:0003729">
    <property type="term" value="F:mRNA binding"/>
    <property type="evidence" value="ECO:0000314"/>
    <property type="project" value="TAIR"/>
</dbReference>
<dbReference type="GO" id="GO:0010206">
    <property type="term" value="P:photosystem II repair"/>
    <property type="evidence" value="ECO:0000304"/>
    <property type="project" value="TAIR"/>
</dbReference>
<dbReference type="GO" id="GO:0006508">
    <property type="term" value="P:proteolysis"/>
    <property type="evidence" value="ECO:0007669"/>
    <property type="project" value="UniProtKB-KW"/>
</dbReference>
<dbReference type="GO" id="GO:0010304">
    <property type="term" value="P:PSII associated light-harvesting complex II catabolic process"/>
    <property type="evidence" value="ECO:0000304"/>
    <property type="project" value="TAIR"/>
</dbReference>
<dbReference type="CDD" id="cd19501">
    <property type="entry name" value="RecA-like_FtsH"/>
    <property type="match status" value="1"/>
</dbReference>
<dbReference type="FunFam" id="1.10.8.60:FF:000001">
    <property type="entry name" value="ATP-dependent zinc metalloprotease FtsH"/>
    <property type="match status" value="1"/>
</dbReference>
<dbReference type="FunFam" id="1.20.58.760:FF:000001">
    <property type="entry name" value="ATP-dependent zinc metalloprotease FtsH"/>
    <property type="match status" value="1"/>
</dbReference>
<dbReference type="FunFam" id="3.40.50.300:FF:000001">
    <property type="entry name" value="ATP-dependent zinc metalloprotease FtsH"/>
    <property type="match status" value="1"/>
</dbReference>
<dbReference type="FunFam" id="3.30.720.210:FF:000003">
    <property type="entry name" value="ATP-dependent zinc metalloprotease FTSH, chloroplastic"/>
    <property type="match status" value="1"/>
</dbReference>
<dbReference type="Gene3D" id="1.10.8.60">
    <property type="match status" value="1"/>
</dbReference>
<dbReference type="Gene3D" id="3.30.720.210">
    <property type="match status" value="1"/>
</dbReference>
<dbReference type="Gene3D" id="3.40.50.300">
    <property type="entry name" value="P-loop containing nucleotide triphosphate hydrolases"/>
    <property type="match status" value="1"/>
</dbReference>
<dbReference type="Gene3D" id="1.20.58.760">
    <property type="entry name" value="Peptidase M41"/>
    <property type="match status" value="1"/>
</dbReference>
<dbReference type="HAMAP" id="MF_01458">
    <property type="entry name" value="FtsH"/>
    <property type="match status" value="1"/>
</dbReference>
<dbReference type="InterPro" id="IPR003593">
    <property type="entry name" value="AAA+_ATPase"/>
</dbReference>
<dbReference type="InterPro" id="IPR041569">
    <property type="entry name" value="AAA_lid_3"/>
</dbReference>
<dbReference type="InterPro" id="IPR003959">
    <property type="entry name" value="ATPase_AAA_core"/>
</dbReference>
<dbReference type="InterPro" id="IPR003960">
    <property type="entry name" value="ATPase_AAA_CS"/>
</dbReference>
<dbReference type="InterPro" id="IPR005936">
    <property type="entry name" value="FtsH"/>
</dbReference>
<dbReference type="InterPro" id="IPR027417">
    <property type="entry name" value="P-loop_NTPase"/>
</dbReference>
<dbReference type="InterPro" id="IPR000642">
    <property type="entry name" value="Peptidase_M41"/>
</dbReference>
<dbReference type="InterPro" id="IPR037219">
    <property type="entry name" value="Peptidase_M41-like"/>
</dbReference>
<dbReference type="NCBIfam" id="TIGR01241">
    <property type="entry name" value="FtsH_fam"/>
    <property type="match status" value="1"/>
</dbReference>
<dbReference type="PANTHER" id="PTHR23076:SF113">
    <property type="entry name" value="ATP-DEPENDENT ZINC METALLOPROTEASE FTSH 1, CHLOROPLASTIC-RELATED"/>
    <property type="match status" value="1"/>
</dbReference>
<dbReference type="PANTHER" id="PTHR23076">
    <property type="entry name" value="METALLOPROTEASE M41 FTSH"/>
    <property type="match status" value="1"/>
</dbReference>
<dbReference type="Pfam" id="PF00004">
    <property type="entry name" value="AAA"/>
    <property type="match status" value="1"/>
</dbReference>
<dbReference type="Pfam" id="PF17862">
    <property type="entry name" value="AAA_lid_3"/>
    <property type="match status" value="1"/>
</dbReference>
<dbReference type="Pfam" id="PF01434">
    <property type="entry name" value="Peptidase_M41"/>
    <property type="match status" value="1"/>
</dbReference>
<dbReference type="SMART" id="SM00382">
    <property type="entry name" value="AAA"/>
    <property type="match status" value="1"/>
</dbReference>
<dbReference type="SUPFAM" id="SSF140990">
    <property type="entry name" value="FtsH protease domain-like"/>
    <property type="match status" value="1"/>
</dbReference>
<dbReference type="SUPFAM" id="SSF52540">
    <property type="entry name" value="P-loop containing nucleoside triphosphate hydrolases"/>
    <property type="match status" value="1"/>
</dbReference>
<dbReference type="PROSITE" id="PS00674">
    <property type="entry name" value="AAA"/>
    <property type="match status" value="1"/>
</dbReference>
<keyword id="KW-0067">ATP-binding</keyword>
<keyword id="KW-0150">Chloroplast</keyword>
<keyword id="KW-0217">Developmental protein</keyword>
<keyword id="KW-0378">Hydrolase</keyword>
<keyword id="KW-0472">Membrane</keyword>
<keyword id="KW-0479">Metal-binding</keyword>
<keyword id="KW-0482">Metalloprotease</keyword>
<keyword id="KW-0547">Nucleotide-binding</keyword>
<keyword id="KW-0934">Plastid</keyword>
<keyword id="KW-0645">Protease</keyword>
<keyword id="KW-1185">Reference proteome</keyword>
<keyword id="KW-0793">Thylakoid</keyword>
<keyword id="KW-0809">Transit peptide</keyword>
<keyword id="KW-0812">Transmembrane</keyword>
<keyword id="KW-1133">Transmembrane helix</keyword>
<keyword id="KW-0832">Ubl conjugation</keyword>
<keyword id="KW-0862">Zinc</keyword>
<accession>Q39102</accession>
<accession>O04172</accession>
<accession>Q9SX43</accession>
<protein>
    <recommendedName>
        <fullName>ATP-dependent zinc metalloprotease FTSH 1, chloroplastic</fullName>
        <shortName>AtFTSH1</shortName>
        <ecNumber>3.4.24.-</ecNumber>
    </recommendedName>
</protein>
<feature type="transit peptide" description="Chloroplast" evidence="2">
    <location>
        <begin position="1"/>
        <end position="48"/>
    </location>
</feature>
<feature type="transit peptide" description="Thylakoid" evidence="13">
    <location>
        <begin position="49"/>
        <end position="86"/>
    </location>
</feature>
<feature type="chain" id="PRO_0000000243" description="ATP-dependent zinc metalloprotease FTSH 1, chloroplastic">
    <location>
        <begin position="87"/>
        <end position="716"/>
    </location>
</feature>
<feature type="transmembrane region" description="Helical" evidence="2">
    <location>
        <begin position="204"/>
        <end position="224"/>
    </location>
</feature>
<feature type="active site" evidence="1">
    <location>
        <position position="525"/>
    </location>
</feature>
<feature type="binding site" evidence="2">
    <location>
        <begin position="302"/>
        <end position="309"/>
    </location>
    <ligand>
        <name>ATP</name>
        <dbReference type="ChEBI" id="CHEBI:30616"/>
    </ligand>
</feature>
<feature type="binding site" evidence="1">
    <location>
        <position position="524"/>
    </location>
    <ligand>
        <name>Zn(2+)</name>
        <dbReference type="ChEBI" id="CHEBI:29105"/>
        <note>catalytic</note>
    </ligand>
</feature>
<feature type="binding site" evidence="1">
    <location>
        <position position="528"/>
    </location>
    <ligand>
        <name>Zn(2+)</name>
        <dbReference type="ChEBI" id="CHEBI:29105"/>
        <note>catalytic</note>
    </ligand>
</feature>
<feature type="binding site" evidence="1">
    <location>
        <position position="605"/>
    </location>
    <ligand>
        <name>Zn(2+)</name>
        <dbReference type="ChEBI" id="CHEBI:29105"/>
        <note>catalytic</note>
    </ligand>
</feature>
<feature type="sequence conflict" description="In Ref. 5; CAA73318." evidence="13" ref="5">
    <original>LAAI</original>
    <variation>YVRV</variation>
    <location>
        <begin position="70"/>
        <end position="73"/>
    </location>
</feature>
<feature type="sequence conflict" description="In Ref. 5; CAA73318." evidence="13" ref="5">
    <original>P</original>
    <variation>S</variation>
    <location>
        <position position="213"/>
    </location>
</feature>
<feature type="sequence conflict" description="In Ref. 1; CAA68141." evidence="13" ref="1">
    <original>CAAS</original>
    <variation>SRPQ</variation>
    <location>
        <begin position="326"/>
        <end position="329"/>
    </location>
</feature>
<feature type="sequence conflict" description="In Ref. 5; CAA73318." evidence="13" ref="5">
    <original>EI</original>
    <variation>RV</variation>
    <location>
        <begin position="362"/>
        <end position="363"/>
    </location>
</feature>
<feature type="sequence conflict" description="In Ref. 5; CAA73318." evidence="13" ref="5">
    <original>R</original>
    <variation>K</variation>
    <location>
        <position position="422"/>
    </location>
</feature>
<feature type="sequence conflict" description="In Ref. 5; CAA73318." evidence="13" ref="5">
    <original>T</original>
    <variation>S</variation>
    <location>
        <position position="463"/>
    </location>
</feature>
<feature type="sequence conflict" description="In Ref. 1; CAA68141." evidence="13" ref="1">
    <original>EL</original>
    <variation>DV</variation>
    <location>
        <begin position="486"/>
        <end position="487"/>
    </location>
</feature>
<feature type="sequence conflict" description="In Ref. 5; CAA73318." evidence="13" ref="5">
    <original>VGALM</original>
    <variation>GGCSY</variation>
    <location>
        <begin position="531"/>
        <end position="535"/>
    </location>
</feature>
<feature type="sequence conflict" description="In Ref. 5; CAA73318." evidence="13" ref="5">
    <original>D</original>
    <variation>N</variation>
    <location>
        <position position="539"/>
    </location>
</feature>
<feature type="sequence conflict" description="In Ref. 5; CAA73318." evidence="13" ref="5">
    <original>VA</original>
    <variation>CS</variation>
    <location>
        <begin position="581"/>
        <end position="582"/>
    </location>
</feature>
<feature type="sequence conflict" description="In Ref. 5; CAA73318." evidence="13" ref="5">
    <original>D</original>
    <variation>A</variation>
    <location>
        <position position="698"/>
    </location>
</feature>
<feature type="sequence conflict" description="In Ref. 5; CAA73318." evidence="13" ref="5">
    <original>EF</original>
    <variation>DS</variation>
    <location>
        <begin position="701"/>
        <end position="702"/>
    </location>
</feature>
<reference key="1">
    <citation type="journal article" date="1996" name="J. Biol. Chem.">
        <title>Identification, characterization, and molecular cloning of a homologue of the bacterial FtsH protease in chloroplasts of higher plants.</title>
        <authorList>
            <person name="Lindahl M."/>
            <person name="Tabak S."/>
            <person name="Cseke L."/>
            <person name="Pichersky E."/>
            <person name="Andersson B."/>
            <person name="Adam Z."/>
        </authorList>
    </citation>
    <scope>NUCLEOTIDE SEQUENCE [MRNA]</scope>
    <scope>SUBCELLULAR LOCATION</scope>
</reference>
<reference key="2">
    <citation type="journal article" date="2000" name="Nature">
        <title>Sequence and analysis of chromosome 1 of the plant Arabidopsis thaliana.</title>
        <authorList>
            <person name="Theologis A."/>
            <person name="Ecker J.R."/>
            <person name="Palm C.J."/>
            <person name="Federspiel N.A."/>
            <person name="Kaul S."/>
            <person name="White O."/>
            <person name="Alonso J."/>
            <person name="Altafi H."/>
            <person name="Araujo R."/>
            <person name="Bowman C.L."/>
            <person name="Brooks S.Y."/>
            <person name="Buehler E."/>
            <person name="Chan A."/>
            <person name="Chao Q."/>
            <person name="Chen H."/>
            <person name="Cheuk R.F."/>
            <person name="Chin C.W."/>
            <person name="Chung M.K."/>
            <person name="Conn L."/>
            <person name="Conway A.B."/>
            <person name="Conway A.R."/>
            <person name="Creasy T.H."/>
            <person name="Dewar K."/>
            <person name="Dunn P."/>
            <person name="Etgu P."/>
            <person name="Feldblyum T.V."/>
            <person name="Feng J.-D."/>
            <person name="Fong B."/>
            <person name="Fujii C.Y."/>
            <person name="Gill J.E."/>
            <person name="Goldsmith A.D."/>
            <person name="Haas B."/>
            <person name="Hansen N.F."/>
            <person name="Hughes B."/>
            <person name="Huizar L."/>
            <person name="Hunter J.L."/>
            <person name="Jenkins J."/>
            <person name="Johnson-Hopson C."/>
            <person name="Khan S."/>
            <person name="Khaykin E."/>
            <person name="Kim C.J."/>
            <person name="Koo H.L."/>
            <person name="Kremenetskaia I."/>
            <person name="Kurtz D.B."/>
            <person name="Kwan A."/>
            <person name="Lam B."/>
            <person name="Langin-Hooper S."/>
            <person name="Lee A."/>
            <person name="Lee J.M."/>
            <person name="Lenz C.A."/>
            <person name="Li J.H."/>
            <person name="Li Y.-P."/>
            <person name="Lin X."/>
            <person name="Liu S.X."/>
            <person name="Liu Z.A."/>
            <person name="Luros J.S."/>
            <person name="Maiti R."/>
            <person name="Marziali A."/>
            <person name="Militscher J."/>
            <person name="Miranda M."/>
            <person name="Nguyen M."/>
            <person name="Nierman W.C."/>
            <person name="Osborne B.I."/>
            <person name="Pai G."/>
            <person name="Peterson J."/>
            <person name="Pham P.K."/>
            <person name="Rizzo M."/>
            <person name="Rooney T."/>
            <person name="Rowley D."/>
            <person name="Sakano H."/>
            <person name="Salzberg S.L."/>
            <person name="Schwartz J.R."/>
            <person name="Shinn P."/>
            <person name="Southwick A.M."/>
            <person name="Sun H."/>
            <person name="Tallon L.J."/>
            <person name="Tambunga G."/>
            <person name="Toriumi M.J."/>
            <person name="Town C.D."/>
            <person name="Utterback T."/>
            <person name="Van Aken S."/>
            <person name="Vaysberg M."/>
            <person name="Vysotskaia V.S."/>
            <person name="Walker M."/>
            <person name="Wu D."/>
            <person name="Yu G."/>
            <person name="Fraser C.M."/>
            <person name="Venter J.C."/>
            <person name="Davis R.W."/>
        </authorList>
    </citation>
    <scope>NUCLEOTIDE SEQUENCE [LARGE SCALE GENOMIC DNA]</scope>
    <source>
        <strain>cv. Columbia</strain>
    </source>
</reference>
<reference key="3">
    <citation type="journal article" date="2017" name="Plant J.">
        <title>Araport11: a complete reannotation of the Arabidopsis thaliana reference genome.</title>
        <authorList>
            <person name="Cheng C.Y."/>
            <person name="Krishnakumar V."/>
            <person name="Chan A.P."/>
            <person name="Thibaud-Nissen F."/>
            <person name="Schobel S."/>
            <person name="Town C.D."/>
        </authorList>
    </citation>
    <scope>GENOME REANNOTATION</scope>
    <source>
        <strain>cv. Columbia</strain>
    </source>
</reference>
<reference key="4">
    <citation type="journal article" date="2003" name="Science">
        <title>Empirical analysis of transcriptional activity in the Arabidopsis genome.</title>
        <authorList>
            <person name="Yamada K."/>
            <person name="Lim J."/>
            <person name="Dale J.M."/>
            <person name="Chen H."/>
            <person name="Shinn P."/>
            <person name="Palm C.J."/>
            <person name="Southwick A.M."/>
            <person name="Wu H.C."/>
            <person name="Kim C.J."/>
            <person name="Nguyen M."/>
            <person name="Pham P.K."/>
            <person name="Cheuk R.F."/>
            <person name="Karlin-Newmann G."/>
            <person name="Liu S.X."/>
            <person name="Lam B."/>
            <person name="Sakano H."/>
            <person name="Wu T."/>
            <person name="Yu G."/>
            <person name="Miranda M."/>
            <person name="Quach H.L."/>
            <person name="Tripp M."/>
            <person name="Chang C.H."/>
            <person name="Lee J.M."/>
            <person name="Toriumi M.J."/>
            <person name="Chan M.M."/>
            <person name="Tang C.C."/>
            <person name="Onodera C.S."/>
            <person name="Deng J.M."/>
            <person name="Akiyama K."/>
            <person name="Ansari Y."/>
            <person name="Arakawa T."/>
            <person name="Banh J."/>
            <person name="Banno F."/>
            <person name="Bowser L."/>
            <person name="Brooks S.Y."/>
            <person name="Carninci P."/>
            <person name="Chao Q."/>
            <person name="Choy N."/>
            <person name="Enju A."/>
            <person name="Goldsmith A.D."/>
            <person name="Gurjal M."/>
            <person name="Hansen N.F."/>
            <person name="Hayashizaki Y."/>
            <person name="Johnson-Hopson C."/>
            <person name="Hsuan V.W."/>
            <person name="Iida K."/>
            <person name="Karnes M."/>
            <person name="Khan S."/>
            <person name="Koesema E."/>
            <person name="Ishida J."/>
            <person name="Jiang P.X."/>
            <person name="Jones T."/>
            <person name="Kawai J."/>
            <person name="Kamiya A."/>
            <person name="Meyers C."/>
            <person name="Nakajima M."/>
            <person name="Narusaka M."/>
            <person name="Seki M."/>
            <person name="Sakurai T."/>
            <person name="Satou M."/>
            <person name="Tamse R."/>
            <person name="Vaysberg M."/>
            <person name="Wallender E.K."/>
            <person name="Wong C."/>
            <person name="Yamamura Y."/>
            <person name="Yuan S."/>
            <person name="Shinozaki K."/>
            <person name="Davis R.W."/>
            <person name="Theologis A."/>
            <person name="Ecker J.R."/>
        </authorList>
    </citation>
    <scope>NUCLEOTIDE SEQUENCE [LARGE SCALE MRNA]</scope>
    <source>
        <strain>cv. Columbia</strain>
    </source>
</reference>
<reference key="5">
    <citation type="online journal article" date="1997" name="Plant Gene Register">
        <title>Arabidopsis thaliana cDNA encoding a homologue to prokaryotic and eukaryotic ATPases.</title>
        <authorList>
            <person name="Mink M."/>
        </authorList>
        <locator>PGR97-085</locator>
    </citation>
    <scope>NUCLEOTIDE SEQUENCE [MRNA] OF 70-702</scope>
</reference>
<reference key="6">
    <citation type="journal article" date="2000" name="Plant Cell">
        <title>The thylakoid FtsH protease plays a role in the light-induced turnover of the photosystem II D1 protein.</title>
        <authorList>
            <person name="Lindahl M."/>
            <person name="Spetea C."/>
            <person name="Hundal T."/>
            <person name="Oppenheim A.B."/>
            <person name="Adam Z."/>
            <person name="Andersson B."/>
        </authorList>
    </citation>
    <scope>FUNCTION</scope>
</reference>
<reference key="7">
    <citation type="journal article" date="2001" name="Plant Physiol.">
        <title>Chloroplast and mitochondrial proteases in Arabidopsis. A proposed nomenclature.</title>
        <authorList>
            <person name="Adam Z."/>
            <person name="Adamska I."/>
            <person name="Nakabayashi K."/>
            <person name="Ostersetzer O."/>
            <person name="Haussuhl K."/>
            <person name="Manuell A."/>
            <person name="Zheng B."/>
            <person name="Vallon O."/>
            <person name="Rodermel S.R."/>
            <person name="Shinozaki K."/>
            <person name="Clarke A.K."/>
        </authorList>
    </citation>
    <scope>GENE FAMILY</scope>
    <scope>NOMENCLATURE</scope>
</reference>
<reference key="8">
    <citation type="journal article" date="2003" name="Plant Cell">
        <title>Coordinated regulation and complex formation of yellow variegated1 and yellow variegated2, chloroplastic FtsH metalloproteases involved in the repair cycle of photosystem II in Arabidopsis thylakoid membranes.</title>
        <authorList>
            <person name="Sakamoto W."/>
            <person name="Zaltsman A."/>
            <person name="Adam Z."/>
            <person name="Takahashi Y."/>
        </authorList>
    </citation>
    <scope>SUBUNIT</scope>
    <scope>SUBCELLULAR LOCATION</scope>
    <scope>DISRUPTION PHENOTYPE</scope>
</reference>
<reference key="9">
    <citation type="journal article" date="2004" name="Plant Physiol.">
        <title>Expression in multigene families. Analysis of chloroplast and mitochondrial proteases.</title>
        <authorList>
            <person name="Sinvany-Villalobo G."/>
            <person name="Davydov O."/>
            <person name="Ben-Ari G."/>
            <person name="Zaltsman A."/>
            <person name="Raskind A."/>
            <person name="Adam Z."/>
        </authorList>
    </citation>
    <scope>INDUCTION BY HIGH LIGHT</scope>
</reference>
<reference key="10">
    <citation type="journal article" date="2004" name="Plant J.">
        <title>The Arabidopsis FtsH metalloprotease gene family: interchangeability of subunits in chloroplast oligomeric complexes.</title>
        <authorList>
            <person name="Yu F."/>
            <person name="Park S."/>
            <person name="Rodermel S.R."/>
        </authorList>
    </citation>
    <scope>SUBUNIT</scope>
    <scope>GENE FAMILY</scope>
    <scope>NOMENCLATURE</scope>
</reference>
<reference key="11">
    <citation type="journal article" date="2005" name="Plant Physiol.">
        <title>Functional redundancy of AtFtsH metalloproteases in thylakoid membrane complexes.</title>
        <authorList>
            <person name="Yu F."/>
            <person name="Park S."/>
            <person name="Rodermel S.R."/>
        </authorList>
    </citation>
    <scope>INTERACTION WITH FTSH2 AND FTSH8</scope>
    <scope>TISSUE SPECIFICITY</scope>
</reference>
<reference key="12">
    <citation type="journal article" date="2005" name="Plant J.">
        <title>Developmental and light effects on the accumulation of FtsH protease in Arabidopsis chloroplasts -- implications for thylakoid formation and photosystem II maintenance.</title>
        <authorList>
            <person name="Zaltsman A."/>
            <person name="Feder A."/>
            <person name="Adam Z."/>
        </authorList>
    </citation>
    <scope>DEVELOPMENTAL STAGE</scope>
</reference>
<reference key="13">
    <citation type="journal article" date="2005" name="Plant Cell">
        <title>Two types of FtsH protease subunits are required for chloroplast biogenesis and Photosystem II repair in Arabidopsis.</title>
        <authorList>
            <person name="Zaltsman A."/>
            <person name="Ori N."/>
            <person name="Adam Z."/>
        </authorList>
    </citation>
    <scope>SUBUNIT</scope>
</reference>
<reference key="14">
    <citation type="journal article" date="2007" name="Plant J.">
        <title>The E3 ligase AtCHIP ubiquitylates FtsH1, a component of the chloroplast FtsH protease, and affects protein degradation in chloroplasts.</title>
        <authorList>
            <person name="Shen G."/>
            <person name="Adam Z."/>
            <person name="Zhang H."/>
        </authorList>
    </citation>
    <scope>INTERACTION WITH CHIP AND HSP70</scope>
    <scope>UBIQUITINATION</scope>
</reference>
<reference key="15">
    <citation type="journal article" date="2008" name="PLoS ONE">
        <title>Sorting signals, N-terminal modifications and abundance of the chloroplast proteome.</title>
        <authorList>
            <person name="Zybailov B."/>
            <person name="Rutschow H."/>
            <person name="Friso G."/>
            <person name="Rudella A."/>
            <person name="Emanuelsson O."/>
            <person name="Sun Q."/>
            <person name="van Wijk K.J."/>
        </authorList>
    </citation>
    <scope>IDENTIFICATION BY MASS SPECTROMETRY</scope>
    <scope>SUBCELLULAR LOCATION [LARGE SCALE ANALYSIS]</scope>
</reference>